<name>AMT2_SCHPO</name>
<reference key="1">
    <citation type="journal article" date="2002" name="Nature">
        <title>The genome sequence of Schizosaccharomyces pombe.</title>
        <authorList>
            <person name="Wood V."/>
            <person name="Gwilliam R."/>
            <person name="Rajandream M.A."/>
            <person name="Lyne M.H."/>
            <person name="Lyne R."/>
            <person name="Stewart A."/>
            <person name="Sgouros J.G."/>
            <person name="Peat N."/>
            <person name="Hayles J."/>
            <person name="Baker S.G."/>
            <person name="Basham D."/>
            <person name="Bowman S."/>
            <person name="Brooks K."/>
            <person name="Brown D."/>
            <person name="Brown S."/>
            <person name="Chillingworth T."/>
            <person name="Churcher C.M."/>
            <person name="Collins M."/>
            <person name="Connor R."/>
            <person name="Cronin A."/>
            <person name="Davis P."/>
            <person name="Feltwell T."/>
            <person name="Fraser A."/>
            <person name="Gentles S."/>
            <person name="Goble A."/>
            <person name="Hamlin N."/>
            <person name="Harris D.E."/>
            <person name="Hidalgo J."/>
            <person name="Hodgson G."/>
            <person name="Holroyd S."/>
            <person name="Hornsby T."/>
            <person name="Howarth S."/>
            <person name="Huckle E.J."/>
            <person name="Hunt S."/>
            <person name="Jagels K."/>
            <person name="James K.D."/>
            <person name="Jones L."/>
            <person name="Jones M."/>
            <person name="Leather S."/>
            <person name="McDonald S."/>
            <person name="McLean J."/>
            <person name="Mooney P."/>
            <person name="Moule S."/>
            <person name="Mungall K.L."/>
            <person name="Murphy L.D."/>
            <person name="Niblett D."/>
            <person name="Odell C."/>
            <person name="Oliver K."/>
            <person name="O'Neil S."/>
            <person name="Pearson D."/>
            <person name="Quail M.A."/>
            <person name="Rabbinowitsch E."/>
            <person name="Rutherford K.M."/>
            <person name="Rutter S."/>
            <person name="Saunders D."/>
            <person name="Seeger K."/>
            <person name="Sharp S."/>
            <person name="Skelton J."/>
            <person name="Simmonds M.N."/>
            <person name="Squares R."/>
            <person name="Squares S."/>
            <person name="Stevens K."/>
            <person name="Taylor K."/>
            <person name="Taylor R.G."/>
            <person name="Tivey A."/>
            <person name="Walsh S.V."/>
            <person name="Warren T."/>
            <person name="Whitehead S."/>
            <person name="Woodward J.R."/>
            <person name="Volckaert G."/>
            <person name="Aert R."/>
            <person name="Robben J."/>
            <person name="Grymonprez B."/>
            <person name="Weltjens I."/>
            <person name="Vanstreels E."/>
            <person name="Rieger M."/>
            <person name="Schaefer M."/>
            <person name="Mueller-Auer S."/>
            <person name="Gabel C."/>
            <person name="Fuchs M."/>
            <person name="Duesterhoeft A."/>
            <person name="Fritzc C."/>
            <person name="Holzer E."/>
            <person name="Moestl D."/>
            <person name="Hilbert H."/>
            <person name="Borzym K."/>
            <person name="Langer I."/>
            <person name="Beck A."/>
            <person name="Lehrach H."/>
            <person name="Reinhardt R."/>
            <person name="Pohl T.M."/>
            <person name="Eger P."/>
            <person name="Zimmermann W."/>
            <person name="Wedler H."/>
            <person name="Wambutt R."/>
            <person name="Purnelle B."/>
            <person name="Goffeau A."/>
            <person name="Cadieu E."/>
            <person name="Dreano S."/>
            <person name="Gloux S."/>
            <person name="Lelaure V."/>
            <person name="Mottier S."/>
            <person name="Galibert F."/>
            <person name="Aves S.J."/>
            <person name="Xiang Z."/>
            <person name="Hunt C."/>
            <person name="Moore K."/>
            <person name="Hurst S.M."/>
            <person name="Lucas M."/>
            <person name="Rochet M."/>
            <person name="Gaillardin C."/>
            <person name="Tallada V.A."/>
            <person name="Garzon A."/>
            <person name="Thode G."/>
            <person name="Daga R.R."/>
            <person name="Cruzado L."/>
            <person name="Jimenez J."/>
            <person name="Sanchez M."/>
            <person name="del Rey F."/>
            <person name="Benito J."/>
            <person name="Dominguez A."/>
            <person name="Revuelta J.L."/>
            <person name="Moreno S."/>
            <person name="Armstrong J."/>
            <person name="Forsburg S.L."/>
            <person name="Cerutti L."/>
            <person name="Lowe T."/>
            <person name="McCombie W.R."/>
            <person name="Paulsen I."/>
            <person name="Potashkin J."/>
            <person name="Shpakovski G.V."/>
            <person name="Ussery D."/>
            <person name="Barrell B.G."/>
            <person name="Nurse P."/>
        </authorList>
    </citation>
    <scope>NUCLEOTIDE SEQUENCE [LARGE SCALE GENOMIC DNA]</scope>
    <source>
        <strain>972 / ATCC 24843</strain>
    </source>
</reference>
<reference key="2">
    <citation type="journal article" date="2000" name="Genes Cells">
        <title>Large-scale screening of intracellular protein localization in living fission yeast cells by the use of a GFP-fusion genomic DNA library.</title>
        <authorList>
            <person name="Ding D.-Q."/>
            <person name="Tomita Y."/>
            <person name="Yamamoto A."/>
            <person name="Chikashige Y."/>
            <person name="Haraguchi T."/>
            <person name="Hiraoka Y."/>
        </authorList>
    </citation>
    <scope>NUCLEOTIDE SEQUENCE [LARGE SCALE GENOMIC DNA] OF 37-212</scope>
    <scope>SUBCELLULAR LOCATION</scope>
    <source>
        <strain>ATCC 38364 / 968</strain>
    </source>
</reference>
<reference key="3">
    <citation type="journal article" date="2006" name="Genes Cells">
        <title>Ammonium transporter genes in the fission yeast Schizosaccharomyces pombe: role in ammonium uptake and a morphological transition.</title>
        <authorList>
            <person name="Mitsuzawa H."/>
        </authorList>
    </citation>
    <scope>FUNCTION</scope>
    <source>
        <strain>FY7406</strain>
    </source>
</reference>
<protein>
    <recommendedName>
        <fullName>Ammonium transporter 2</fullName>
    </recommendedName>
</protein>
<dbReference type="EMBL" id="CU329670">
    <property type="protein sequence ID" value="CAB65815.1"/>
    <property type="molecule type" value="Genomic_DNA"/>
</dbReference>
<dbReference type="EMBL" id="AB027805">
    <property type="protein sequence ID" value="BAA87109.1"/>
    <property type="molecule type" value="Genomic_DNA"/>
</dbReference>
<dbReference type="PIR" id="T50244">
    <property type="entry name" value="T50244"/>
</dbReference>
<dbReference type="RefSeq" id="NP_593462.1">
    <property type="nucleotide sequence ID" value="NM_001018895.2"/>
</dbReference>
<dbReference type="SMR" id="Q9US00"/>
<dbReference type="BioGRID" id="279919">
    <property type="interactions" value="22"/>
</dbReference>
<dbReference type="FunCoup" id="Q9US00">
    <property type="interactions" value="79"/>
</dbReference>
<dbReference type="STRING" id="284812.Q9US00"/>
<dbReference type="PaxDb" id="4896-SPAC664.14.1"/>
<dbReference type="EnsemblFungi" id="SPAC664.14.1">
    <property type="protein sequence ID" value="SPAC664.14.1:pep"/>
    <property type="gene ID" value="SPAC664.14"/>
</dbReference>
<dbReference type="GeneID" id="2543501"/>
<dbReference type="KEGG" id="spo:2543501"/>
<dbReference type="PomBase" id="SPAC664.14">
    <property type="gene designation" value="amt2"/>
</dbReference>
<dbReference type="VEuPathDB" id="FungiDB:SPAC664.14"/>
<dbReference type="eggNOG" id="KOG0682">
    <property type="taxonomic scope" value="Eukaryota"/>
</dbReference>
<dbReference type="HOGENOM" id="CLU_000445_33_0_1"/>
<dbReference type="InParanoid" id="Q9US00"/>
<dbReference type="OMA" id="WTSIVYE"/>
<dbReference type="PhylomeDB" id="Q9US00"/>
<dbReference type="PRO" id="PR:Q9US00"/>
<dbReference type="Proteomes" id="UP000002485">
    <property type="component" value="Chromosome I"/>
</dbReference>
<dbReference type="GO" id="GO:0005886">
    <property type="term" value="C:plasma membrane"/>
    <property type="evidence" value="ECO:0000318"/>
    <property type="project" value="GO_Central"/>
</dbReference>
<dbReference type="GO" id="GO:0008519">
    <property type="term" value="F:ammonium channel activity"/>
    <property type="evidence" value="ECO:0000315"/>
    <property type="project" value="PomBase"/>
</dbReference>
<dbReference type="GO" id="GO:0015200">
    <property type="term" value="F:methylammonium transmembrane transporter activity"/>
    <property type="evidence" value="ECO:0000315"/>
    <property type="project" value="PomBase"/>
</dbReference>
<dbReference type="GO" id="GO:0072488">
    <property type="term" value="P:ammonium transmembrane transport"/>
    <property type="evidence" value="ECO:0000315"/>
    <property type="project" value="PomBase"/>
</dbReference>
<dbReference type="GO" id="GO:0072489">
    <property type="term" value="P:methylammonium transmembrane transport"/>
    <property type="evidence" value="ECO:0000315"/>
    <property type="project" value="PomBase"/>
</dbReference>
<dbReference type="FunFam" id="1.10.3430.10:FF:000003">
    <property type="entry name" value="Ammonium transporter"/>
    <property type="match status" value="1"/>
</dbReference>
<dbReference type="Gene3D" id="1.10.3430.10">
    <property type="entry name" value="Ammonium transporter AmtB like domains"/>
    <property type="match status" value="1"/>
</dbReference>
<dbReference type="InterPro" id="IPR029020">
    <property type="entry name" value="Ammonium/urea_transptr"/>
</dbReference>
<dbReference type="InterPro" id="IPR001905">
    <property type="entry name" value="Ammonium_transpt"/>
</dbReference>
<dbReference type="InterPro" id="IPR024041">
    <property type="entry name" value="NH4_transpt_AmtB-like_dom"/>
</dbReference>
<dbReference type="NCBIfam" id="TIGR00836">
    <property type="entry name" value="amt"/>
    <property type="match status" value="1"/>
</dbReference>
<dbReference type="PANTHER" id="PTHR43029:SF37">
    <property type="entry name" value="AMMONIUM TRANSPORTER 2"/>
    <property type="match status" value="1"/>
</dbReference>
<dbReference type="PANTHER" id="PTHR43029">
    <property type="entry name" value="AMMONIUM TRANSPORTER MEP2"/>
    <property type="match status" value="1"/>
</dbReference>
<dbReference type="Pfam" id="PF00909">
    <property type="entry name" value="Ammonium_transp"/>
    <property type="match status" value="1"/>
</dbReference>
<dbReference type="SUPFAM" id="SSF111352">
    <property type="entry name" value="Ammonium transporter"/>
    <property type="match status" value="1"/>
</dbReference>
<keyword id="KW-0924">Ammonia transport</keyword>
<keyword id="KW-0472">Membrane</keyword>
<keyword id="KW-1185">Reference proteome</keyword>
<keyword id="KW-0812">Transmembrane</keyword>
<keyword id="KW-1133">Transmembrane helix</keyword>
<keyword id="KW-0813">Transport</keyword>
<feature type="chain" id="PRO_0000278388" description="Ammonium transporter 2">
    <location>
        <begin position="1"/>
        <end position="512"/>
    </location>
</feature>
<feature type="topological domain" description="Extracellular" evidence="1">
    <location>
        <begin position="1"/>
        <end position="47"/>
    </location>
</feature>
<feature type="transmembrane region" description="Helical" evidence="1">
    <location>
        <begin position="48"/>
        <end position="68"/>
    </location>
</feature>
<feature type="topological domain" description="Cytoplasmic" evidence="1">
    <location>
        <begin position="69"/>
        <end position="77"/>
    </location>
</feature>
<feature type="transmembrane region" description="Helical" evidence="1">
    <location>
        <begin position="78"/>
        <end position="98"/>
    </location>
</feature>
<feature type="topological domain" description="Extracellular" evidence="1">
    <location>
        <begin position="99"/>
        <end position="137"/>
    </location>
</feature>
<feature type="transmembrane region" description="Helical" evidence="1">
    <location>
        <begin position="138"/>
        <end position="158"/>
    </location>
</feature>
<feature type="topological domain" description="Cytoplasmic" evidence="1">
    <location>
        <begin position="159"/>
        <end position="167"/>
    </location>
</feature>
<feature type="transmembrane region" description="Helical" evidence="1">
    <location>
        <begin position="168"/>
        <end position="188"/>
    </location>
</feature>
<feature type="topological domain" description="Extracellular" evidence="1">
    <location>
        <begin position="189"/>
        <end position="201"/>
    </location>
</feature>
<feature type="transmembrane region" description="Helical" evidence="1">
    <location>
        <begin position="202"/>
        <end position="222"/>
    </location>
</feature>
<feature type="topological domain" description="Cytoplasmic" evidence="1">
    <location>
        <begin position="223"/>
        <end position="238"/>
    </location>
</feature>
<feature type="transmembrane region" description="Helical" evidence="1">
    <location>
        <begin position="239"/>
        <end position="259"/>
    </location>
</feature>
<feature type="topological domain" description="Extracellular" evidence="1">
    <location>
        <begin position="260"/>
        <end position="267"/>
    </location>
</feature>
<feature type="transmembrane region" description="Helical" evidence="1">
    <location>
        <begin position="268"/>
        <end position="288"/>
    </location>
</feature>
<feature type="topological domain" description="Cytoplasmic" evidence="1">
    <location>
        <begin position="289"/>
        <end position="300"/>
    </location>
</feature>
<feature type="transmembrane region" description="Helical" evidence="1">
    <location>
        <begin position="301"/>
        <end position="321"/>
    </location>
</feature>
<feature type="topological domain" description="Extracellular" evidence="1">
    <location>
        <position position="322"/>
    </location>
</feature>
<feature type="transmembrane region" description="Helical" evidence="1">
    <location>
        <begin position="323"/>
        <end position="343"/>
    </location>
</feature>
<feature type="topological domain" description="Cytoplasmic" evidence="1">
    <location>
        <begin position="344"/>
        <end position="354"/>
    </location>
</feature>
<feature type="transmembrane region" description="Helical" evidence="1">
    <location>
        <begin position="355"/>
        <end position="375"/>
    </location>
</feature>
<feature type="topological domain" description="Extracellular" evidence="1">
    <location>
        <begin position="376"/>
        <end position="406"/>
    </location>
</feature>
<feature type="transmembrane region" description="Helical" evidence="1">
    <location>
        <begin position="407"/>
        <end position="427"/>
    </location>
</feature>
<feature type="topological domain" description="Cytoplasmic" evidence="1">
    <location>
        <begin position="428"/>
        <end position="512"/>
    </location>
</feature>
<proteinExistence type="inferred from homology"/>
<accession>Q9US00</accession>
<accession>Q9UU53</accession>
<evidence type="ECO:0000255" key="1"/>
<evidence type="ECO:0000269" key="2">
    <source>
    </source>
</evidence>
<evidence type="ECO:0000269" key="3">
    <source>
    </source>
</evidence>
<evidence type="ECO:0000305" key="4"/>
<organism>
    <name type="scientific">Schizosaccharomyces pombe (strain 972 / ATCC 24843)</name>
    <name type="common">Fission yeast</name>
    <dbReference type="NCBI Taxonomy" id="284812"/>
    <lineage>
        <taxon>Eukaryota</taxon>
        <taxon>Fungi</taxon>
        <taxon>Dikarya</taxon>
        <taxon>Ascomycota</taxon>
        <taxon>Taphrinomycotina</taxon>
        <taxon>Schizosaccharomycetes</taxon>
        <taxon>Schizosaccharomycetales</taxon>
        <taxon>Schizosaccharomycetaceae</taxon>
        <taxon>Schizosaccharomyces</taxon>
    </lineage>
</organism>
<comment type="function">
    <text evidence="3">Transporter for ammonium to use as a nitrogen source.</text>
</comment>
<comment type="subcellular location">
    <subcellularLocation>
        <location evidence="2">Membrane</location>
        <topology evidence="2">Multi-pass membrane protein</topology>
    </subcellularLocation>
</comment>
<comment type="similarity">
    <text evidence="4">Belongs to the ammonia transporter channel (TC 1.A.11.2) family.</text>
</comment>
<sequence length="512" mass="55570">MSSVNSIPTATSTVYISVLPATATPSGGSGGNVLHEDLNKFYDYGNTSWILACTPLCLIMVPGVAFFYSGLARRKNTLALIMLSMLGLCVSFFQWYFWGYSLAFSQTGTSGYIGNLRHFAFIRTLADYSPGSNNIPELVFANFQGMFAAITVALFTGAAAERGRIGPMLIITFVWLTVVYCPIACWIWNPNGWAFKFGVYDFAGGGPVEVGSGFAALAYTVCLGRRSKFVEEQFRPHSVLNVVLGTSLLWFGWLGFNGGSAYGSNLRAAMAITNTNLAGAVAGLVWVIYDYIFRTRKWSTIGFCSGVVAGLVAATPCAGFVSPHASLAIGAITGLCCNWAIKLKSHMRIDDAMDIFAIHGVAGFVGTFLNGLFAVDYIAAMDGIYVGENKIRGGWFDHHWRQLGLQMAYICAVGAYDFVVTFIILFITDKIPYLQLRVSPDAEEIGVDADQIGEYAFDYIEERREYKHWKISPAGVPEEIIISNGVAQPTGNVAAPGKILESTNPLELGLTI</sequence>
<gene>
    <name type="primary">amt2</name>
    <name type="ORF">SPAC664.14</name>
</gene>